<feature type="chain" id="PRO_1000003945" description="Small ribosomal subunit protein uS2">
    <location>
        <begin position="1"/>
        <end position="248"/>
    </location>
</feature>
<protein>
    <recommendedName>
        <fullName evidence="1">Small ribosomal subunit protein uS2</fullName>
    </recommendedName>
    <alternativeName>
        <fullName evidence="2">30S ribosomal protein S2</fullName>
    </alternativeName>
</protein>
<reference key="1">
    <citation type="journal article" date="2009" name="BMC Genomics">
        <title>Metabolic analysis of the soil microbe Dechloromonas aromatica str. RCB: indications of a surprisingly complex life-style and cryptic anaerobic pathways for aromatic degradation.</title>
        <authorList>
            <person name="Salinero K.K."/>
            <person name="Keller K."/>
            <person name="Feil W.S."/>
            <person name="Feil H."/>
            <person name="Trong S."/>
            <person name="Di Bartolo G."/>
            <person name="Lapidus A."/>
        </authorList>
    </citation>
    <scope>NUCLEOTIDE SEQUENCE [LARGE SCALE GENOMIC DNA]</scope>
    <source>
        <strain>RCB</strain>
    </source>
</reference>
<evidence type="ECO:0000255" key="1">
    <source>
        <dbReference type="HAMAP-Rule" id="MF_00291"/>
    </source>
</evidence>
<evidence type="ECO:0000305" key="2"/>
<dbReference type="EMBL" id="CP000089">
    <property type="protein sequence ID" value="AAZ46489.1"/>
    <property type="molecule type" value="Genomic_DNA"/>
</dbReference>
<dbReference type="SMR" id="Q47F92"/>
<dbReference type="STRING" id="159087.Daro_1742"/>
<dbReference type="KEGG" id="dar:Daro_1742"/>
<dbReference type="eggNOG" id="COG0052">
    <property type="taxonomic scope" value="Bacteria"/>
</dbReference>
<dbReference type="HOGENOM" id="CLU_040318_1_2_4"/>
<dbReference type="OrthoDB" id="9808036at2"/>
<dbReference type="GO" id="GO:0022627">
    <property type="term" value="C:cytosolic small ribosomal subunit"/>
    <property type="evidence" value="ECO:0007669"/>
    <property type="project" value="TreeGrafter"/>
</dbReference>
<dbReference type="GO" id="GO:0003735">
    <property type="term" value="F:structural constituent of ribosome"/>
    <property type="evidence" value="ECO:0007669"/>
    <property type="project" value="InterPro"/>
</dbReference>
<dbReference type="GO" id="GO:0006412">
    <property type="term" value="P:translation"/>
    <property type="evidence" value="ECO:0007669"/>
    <property type="project" value="UniProtKB-UniRule"/>
</dbReference>
<dbReference type="CDD" id="cd01425">
    <property type="entry name" value="RPS2"/>
    <property type="match status" value="1"/>
</dbReference>
<dbReference type="FunFam" id="1.10.287.610:FF:000001">
    <property type="entry name" value="30S ribosomal protein S2"/>
    <property type="match status" value="1"/>
</dbReference>
<dbReference type="Gene3D" id="3.40.50.10490">
    <property type="entry name" value="Glucose-6-phosphate isomerase like protein, domain 1"/>
    <property type="match status" value="1"/>
</dbReference>
<dbReference type="Gene3D" id="1.10.287.610">
    <property type="entry name" value="Helix hairpin bin"/>
    <property type="match status" value="1"/>
</dbReference>
<dbReference type="HAMAP" id="MF_00291_B">
    <property type="entry name" value="Ribosomal_uS2_B"/>
    <property type="match status" value="1"/>
</dbReference>
<dbReference type="InterPro" id="IPR001865">
    <property type="entry name" value="Ribosomal_uS2"/>
</dbReference>
<dbReference type="InterPro" id="IPR005706">
    <property type="entry name" value="Ribosomal_uS2_bac/mit/plastid"/>
</dbReference>
<dbReference type="InterPro" id="IPR018130">
    <property type="entry name" value="Ribosomal_uS2_CS"/>
</dbReference>
<dbReference type="InterPro" id="IPR023591">
    <property type="entry name" value="Ribosomal_uS2_flav_dom_sf"/>
</dbReference>
<dbReference type="NCBIfam" id="TIGR01011">
    <property type="entry name" value="rpsB_bact"/>
    <property type="match status" value="1"/>
</dbReference>
<dbReference type="PANTHER" id="PTHR12534">
    <property type="entry name" value="30S RIBOSOMAL PROTEIN S2 PROKARYOTIC AND ORGANELLAR"/>
    <property type="match status" value="1"/>
</dbReference>
<dbReference type="PANTHER" id="PTHR12534:SF0">
    <property type="entry name" value="SMALL RIBOSOMAL SUBUNIT PROTEIN US2M"/>
    <property type="match status" value="1"/>
</dbReference>
<dbReference type="Pfam" id="PF00318">
    <property type="entry name" value="Ribosomal_S2"/>
    <property type="match status" value="1"/>
</dbReference>
<dbReference type="PRINTS" id="PR00395">
    <property type="entry name" value="RIBOSOMALS2"/>
</dbReference>
<dbReference type="SUPFAM" id="SSF52313">
    <property type="entry name" value="Ribosomal protein S2"/>
    <property type="match status" value="1"/>
</dbReference>
<dbReference type="PROSITE" id="PS00962">
    <property type="entry name" value="RIBOSOMAL_S2_1"/>
    <property type="match status" value="1"/>
</dbReference>
<organism>
    <name type="scientific">Dechloromonas aromatica (strain RCB)</name>
    <dbReference type="NCBI Taxonomy" id="159087"/>
    <lineage>
        <taxon>Bacteria</taxon>
        <taxon>Pseudomonadati</taxon>
        <taxon>Pseudomonadota</taxon>
        <taxon>Betaproteobacteria</taxon>
        <taxon>Rhodocyclales</taxon>
        <taxon>Azonexaceae</taxon>
        <taxon>Dechloromonas</taxon>
    </lineage>
</organism>
<keyword id="KW-0687">Ribonucleoprotein</keyword>
<keyword id="KW-0689">Ribosomal protein</keyword>
<comment type="similarity">
    <text evidence="1">Belongs to the universal ribosomal protein uS2 family.</text>
</comment>
<name>RS2_DECAR</name>
<gene>
    <name evidence="1" type="primary">rpsB</name>
    <name type="ordered locus">Daro_1742</name>
</gene>
<accession>Q47F92</accession>
<sequence>MSVTMREMLEAGVHFGHQTRFWSPKMAPYIFGARNKIHIVNLEKTLAKYNEAMAFVKKLASSRGTILFVGTKRQAREIIGEEALRAGAPFVDQRWLGGMLTNFKTVKTSIKRLKDMEVAVEAGELEKMPKKEALTFRRELEKLQKSIGGIKEMAGLPDAIFVIDVGYHKIAITEAEKLGIPVIGVVDTNHSPDGVAYVIPGNDDSSRAIQLYARGVADAILEGRSQVVQDIVAAGGDDEFVEVQDAAQ</sequence>
<proteinExistence type="inferred from homology"/>